<accession>C1EN02</accession>
<protein>
    <recommendedName>
        <fullName evidence="1">Glycerol-3-phosphate dehydrogenase [NAD(P)+]</fullName>
        <ecNumber evidence="1">1.1.1.94</ecNumber>
    </recommendedName>
    <alternativeName>
        <fullName evidence="1">NAD(P)(+)-dependent glycerol-3-phosphate dehydrogenase</fullName>
    </alternativeName>
    <alternativeName>
        <fullName evidence="1">NAD(P)H-dependent dihydroxyacetone-phosphate reductase</fullName>
    </alternativeName>
</protein>
<feature type="chain" id="PRO_1000190120" description="Glycerol-3-phosphate dehydrogenase [NAD(P)+]">
    <location>
        <begin position="1"/>
        <end position="340"/>
    </location>
</feature>
<feature type="active site" description="Proton acceptor" evidence="1">
    <location>
        <position position="192"/>
    </location>
</feature>
<feature type="binding site" evidence="1">
    <location>
        <position position="11"/>
    </location>
    <ligand>
        <name>NADPH</name>
        <dbReference type="ChEBI" id="CHEBI:57783"/>
    </ligand>
</feature>
<feature type="binding site" evidence="1">
    <location>
        <position position="12"/>
    </location>
    <ligand>
        <name>NADPH</name>
        <dbReference type="ChEBI" id="CHEBI:57783"/>
    </ligand>
</feature>
<feature type="binding site" evidence="1">
    <location>
        <position position="33"/>
    </location>
    <ligand>
        <name>NADPH</name>
        <dbReference type="ChEBI" id="CHEBI:57783"/>
    </ligand>
</feature>
<feature type="binding site" evidence="1">
    <location>
        <position position="106"/>
    </location>
    <ligand>
        <name>NADPH</name>
        <dbReference type="ChEBI" id="CHEBI:57783"/>
    </ligand>
</feature>
<feature type="binding site" evidence="1">
    <location>
        <position position="106"/>
    </location>
    <ligand>
        <name>sn-glycerol 3-phosphate</name>
        <dbReference type="ChEBI" id="CHEBI:57597"/>
    </ligand>
</feature>
<feature type="binding site" evidence="1">
    <location>
        <position position="137"/>
    </location>
    <ligand>
        <name>sn-glycerol 3-phosphate</name>
        <dbReference type="ChEBI" id="CHEBI:57597"/>
    </ligand>
</feature>
<feature type="binding site" evidence="1">
    <location>
        <position position="139"/>
    </location>
    <ligand>
        <name>sn-glycerol 3-phosphate</name>
        <dbReference type="ChEBI" id="CHEBI:57597"/>
    </ligand>
</feature>
<feature type="binding site" evidence="1">
    <location>
        <position position="141"/>
    </location>
    <ligand>
        <name>NADPH</name>
        <dbReference type="ChEBI" id="CHEBI:57783"/>
    </ligand>
</feature>
<feature type="binding site" evidence="1">
    <location>
        <position position="192"/>
    </location>
    <ligand>
        <name>sn-glycerol 3-phosphate</name>
        <dbReference type="ChEBI" id="CHEBI:57597"/>
    </ligand>
</feature>
<feature type="binding site" evidence="1">
    <location>
        <position position="245"/>
    </location>
    <ligand>
        <name>sn-glycerol 3-phosphate</name>
        <dbReference type="ChEBI" id="CHEBI:57597"/>
    </ligand>
</feature>
<feature type="binding site" evidence="1">
    <location>
        <position position="255"/>
    </location>
    <ligand>
        <name>sn-glycerol 3-phosphate</name>
        <dbReference type="ChEBI" id="CHEBI:57597"/>
    </ligand>
</feature>
<feature type="binding site" evidence="1">
    <location>
        <position position="256"/>
    </location>
    <ligand>
        <name>NADPH</name>
        <dbReference type="ChEBI" id="CHEBI:57783"/>
    </ligand>
</feature>
<feature type="binding site" evidence="1">
    <location>
        <position position="256"/>
    </location>
    <ligand>
        <name>sn-glycerol 3-phosphate</name>
        <dbReference type="ChEBI" id="CHEBI:57597"/>
    </ligand>
</feature>
<feature type="binding site" evidence="1">
    <location>
        <position position="257"/>
    </location>
    <ligand>
        <name>sn-glycerol 3-phosphate</name>
        <dbReference type="ChEBI" id="CHEBI:57597"/>
    </ligand>
</feature>
<feature type="binding site" evidence="1">
    <location>
        <position position="280"/>
    </location>
    <ligand>
        <name>NADPH</name>
        <dbReference type="ChEBI" id="CHEBI:57783"/>
    </ligand>
</feature>
<feature type="binding site" evidence="1">
    <location>
        <position position="282"/>
    </location>
    <ligand>
        <name>NADPH</name>
        <dbReference type="ChEBI" id="CHEBI:57783"/>
    </ligand>
</feature>
<dbReference type="EC" id="1.1.1.94" evidence="1"/>
<dbReference type="EMBL" id="CP001407">
    <property type="protein sequence ID" value="ACO28243.1"/>
    <property type="molecule type" value="Genomic_DNA"/>
</dbReference>
<dbReference type="RefSeq" id="WP_000161776.1">
    <property type="nucleotide sequence ID" value="NZ_CP009318.1"/>
</dbReference>
<dbReference type="SMR" id="C1EN02"/>
<dbReference type="KEGG" id="bcx:BCA_1564"/>
<dbReference type="PATRIC" id="fig|572264.18.peg.1512"/>
<dbReference type="UniPathway" id="UPA00940"/>
<dbReference type="Proteomes" id="UP000002210">
    <property type="component" value="Chromosome"/>
</dbReference>
<dbReference type="GO" id="GO:0005829">
    <property type="term" value="C:cytosol"/>
    <property type="evidence" value="ECO:0007669"/>
    <property type="project" value="TreeGrafter"/>
</dbReference>
<dbReference type="GO" id="GO:0047952">
    <property type="term" value="F:glycerol-3-phosphate dehydrogenase [NAD(P)+] activity"/>
    <property type="evidence" value="ECO:0007669"/>
    <property type="project" value="UniProtKB-UniRule"/>
</dbReference>
<dbReference type="GO" id="GO:0051287">
    <property type="term" value="F:NAD binding"/>
    <property type="evidence" value="ECO:0007669"/>
    <property type="project" value="InterPro"/>
</dbReference>
<dbReference type="GO" id="GO:0005975">
    <property type="term" value="P:carbohydrate metabolic process"/>
    <property type="evidence" value="ECO:0007669"/>
    <property type="project" value="InterPro"/>
</dbReference>
<dbReference type="GO" id="GO:0046167">
    <property type="term" value="P:glycerol-3-phosphate biosynthetic process"/>
    <property type="evidence" value="ECO:0007669"/>
    <property type="project" value="UniProtKB-UniRule"/>
</dbReference>
<dbReference type="GO" id="GO:0046168">
    <property type="term" value="P:glycerol-3-phosphate catabolic process"/>
    <property type="evidence" value="ECO:0007669"/>
    <property type="project" value="InterPro"/>
</dbReference>
<dbReference type="GO" id="GO:0006650">
    <property type="term" value="P:glycerophospholipid metabolic process"/>
    <property type="evidence" value="ECO:0007669"/>
    <property type="project" value="UniProtKB-UniRule"/>
</dbReference>
<dbReference type="GO" id="GO:0008654">
    <property type="term" value="P:phospholipid biosynthetic process"/>
    <property type="evidence" value="ECO:0007669"/>
    <property type="project" value="UniProtKB-KW"/>
</dbReference>
<dbReference type="FunFam" id="1.10.1040.10:FF:000001">
    <property type="entry name" value="Glycerol-3-phosphate dehydrogenase [NAD(P)+]"/>
    <property type="match status" value="1"/>
</dbReference>
<dbReference type="FunFam" id="3.40.50.720:FF:000019">
    <property type="entry name" value="Glycerol-3-phosphate dehydrogenase [NAD(P)+]"/>
    <property type="match status" value="1"/>
</dbReference>
<dbReference type="Gene3D" id="1.10.1040.10">
    <property type="entry name" value="N-(1-d-carboxylethyl)-l-norvaline Dehydrogenase, domain 2"/>
    <property type="match status" value="1"/>
</dbReference>
<dbReference type="Gene3D" id="3.40.50.720">
    <property type="entry name" value="NAD(P)-binding Rossmann-like Domain"/>
    <property type="match status" value="1"/>
</dbReference>
<dbReference type="HAMAP" id="MF_00394">
    <property type="entry name" value="NAD_Glyc3P_dehydrog"/>
    <property type="match status" value="1"/>
</dbReference>
<dbReference type="InterPro" id="IPR008927">
    <property type="entry name" value="6-PGluconate_DH-like_C_sf"/>
</dbReference>
<dbReference type="InterPro" id="IPR013328">
    <property type="entry name" value="6PGD_dom2"/>
</dbReference>
<dbReference type="InterPro" id="IPR006168">
    <property type="entry name" value="G3P_DH_NAD-dep"/>
</dbReference>
<dbReference type="InterPro" id="IPR006109">
    <property type="entry name" value="G3P_DH_NAD-dep_C"/>
</dbReference>
<dbReference type="InterPro" id="IPR011128">
    <property type="entry name" value="G3P_DH_NAD-dep_N"/>
</dbReference>
<dbReference type="InterPro" id="IPR036291">
    <property type="entry name" value="NAD(P)-bd_dom_sf"/>
</dbReference>
<dbReference type="NCBIfam" id="NF000940">
    <property type="entry name" value="PRK00094.1-2"/>
    <property type="match status" value="1"/>
</dbReference>
<dbReference type="NCBIfam" id="NF000941">
    <property type="entry name" value="PRK00094.1-3"/>
    <property type="match status" value="1"/>
</dbReference>
<dbReference type="NCBIfam" id="NF000942">
    <property type="entry name" value="PRK00094.1-4"/>
    <property type="match status" value="1"/>
</dbReference>
<dbReference type="PANTHER" id="PTHR11728">
    <property type="entry name" value="GLYCEROL-3-PHOSPHATE DEHYDROGENASE"/>
    <property type="match status" value="1"/>
</dbReference>
<dbReference type="PANTHER" id="PTHR11728:SF1">
    <property type="entry name" value="GLYCEROL-3-PHOSPHATE DEHYDROGENASE [NAD(+)] 2, CHLOROPLASTIC"/>
    <property type="match status" value="1"/>
</dbReference>
<dbReference type="Pfam" id="PF07479">
    <property type="entry name" value="NAD_Gly3P_dh_C"/>
    <property type="match status" value="1"/>
</dbReference>
<dbReference type="Pfam" id="PF01210">
    <property type="entry name" value="NAD_Gly3P_dh_N"/>
    <property type="match status" value="1"/>
</dbReference>
<dbReference type="PIRSF" id="PIRSF000114">
    <property type="entry name" value="Glycerol-3-P_dh"/>
    <property type="match status" value="1"/>
</dbReference>
<dbReference type="PRINTS" id="PR00077">
    <property type="entry name" value="GPDHDRGNASE"/>
</dbReference>
<dbReference type="SUPFAM" id="SSF48179">
    <property type="entry name" value="6-phosphogluconate dehydrogenase C-terminal domain-like"/>
    <property type="match status" value="1"/>
</dbReference>
<dbReference type="SUPFAM" id="SSF51735">
    <property type="entry name" value="NAD(P)-binding Rossmann-fold domains"/>
    <property type="match status" value="1"/>
</dbReference>
<dbReference type="PROSITE" id="PS00957">
    <property type="entry name" value="NAD_G3PDH"/>
    <property type="match status" value="1"/>
</dbReference>
<name>GPDA_BACC3</name>
<organism>
    <name type="scientific">Bacillus cereus (strain 03BB102)</name>
    <dbReference type="NCBI Taxonomy" id="572264"/>
    <lineage>
        <taxon>Bacteria</taxon>
        <taxon>Bacillati</taxon>
        <taxon>Bacillota</taxon>
        <taxon>Bacilli</taxon>
        <taxon>Bacillales</taxon>
        <taxon>Bacillaceae</taxon>
        <taxon>Bacillus</taxon>
        <taxon>Bacillus cereus group</taxon>
    </lineage>
</organism>
<gene>
    <name evidence="1" type="primary">gpsA</name>
    <name type="ordered locus">BCA_1564</name>
</gene>
<evidence type="ECO:0000255" key="1">
    <source>
        <dbReference type="HAMAP-Rule" id="MF_00394"/>
    </source>
</evidence>
<comment type="function">
    <text evidence="1">Catalyzes the reduction of the glycolytic intermediate dihydroxyacetone phosphate (DHAP) to sn-glycerol 3-phosphate (G3P), the key precursor for phospholipid synthesis.</text>
</comment>
<comment type="catalytic activity">
    <reaction evidence="1">
        <text>sn-glycerol 3-phosphate + NAD(+) = dihydroxyacetone phosphate + NADH + H(+)</text>
        <dbReference type="Rhea" id="RHEA:11092"/>
        <dbReference type="ChEBI" id="CHEBI:15378"/>
        <dbReference type="ChEBI" id="CHEBI:57540"/>
        <dbReference type="ChEBI" id="CHEBI:57597"/>
        <dbReference type="ChEBI" id="CHEBI:57642"/>
        <dbReference type="ChEBI" id="CHEBI:57945"/>
        <dbReference type="EC" id="1.1.1.94"/>
    </reaction>
    <physiologicalReaction direction="right-to-left" evidence="1">
        <dbReference type="Rhea" id="RHEA:11094"/>
    </physiologicalReaction>
</comment>
<comment type="catalytic activity">
    <reaction evidence="1">
        <text>sn-glycerol 3-phosphate + NADP(+) = dihydroxyacetone phosphate + NADPH + H(+)</text>
        <dbReference type="Rhea" id="RHEA:11096"/>
        <dbReference type="ChEBI" id="CHEBI:15378"/>
        <dbReference type="ChEBI" id="CHEBI:57597"/>
        <dbReference type="ChEBI" id="CHEBI:57642"/>
        <dbReference type="ChEBI" id="CHEBI:57783"/>
        <dbReference type="ChEBI" id="CHEBI:58349"/>
        <dbReference type="EC" id="1.1.1.94"/>
    </reaction>
    <physiologicalReaction direction="right-to-left" evidence="1">
        <dbReference type="Rhea" id="RHEA:11098"/>
    </physiologicalReaction>
</comment>
<comment type="pathway">
    <text evidence="1">Membrane lipid metabolism; glycerophospholipid metabolism.</text>
</comment>
<comment type="subcellular location">
    <subcellularLocation>
        <location evidence="1">Cytoplasm</location>
    </subcellularLocation>
</comment>
<comment type="similarity">
    <text evidence="1">Belongs to the NAD-dependent glycerol-3-phosphate dehydrogenase family.</text>
</comment>
<proteinExistence type="inferred from homology"/>
<keyword id="KW-0963">Cytoplasm</keyword>
<keyword id="KW-0444">Lipid biosynthesis</keyword>
<keyword id="KW-0443">Lipid metabolism</keyword>
<keyword id="KW-0520">NAD</keyword>
<keyword id="KW-0521">NADP</keyword>
<keyword id="KW-0547">Nucleotide-binding</keyword>
<keyword id="KW-0560">Oxidoreductase</keyword>
<keyword id="KW-0594">Phospholipid biosynthesis</keyword>
<keyword id="KW-1208">Phospholipid metabolism</keyword>
<reference key="1">
    <citation type="submission" date="2009-02" db="EMBL/GenBank/DDBJ databases">
        <title>Genome sequence of Bacillus cereus 03BB102.</title>
        <authorList>
            <person name="Dodson R.J."/>
            <person name="Jackson P."/>
            <person name="Munk A.C."/>
            <person name="Brettin T."/>
            <person name="Bruce D."/>
            <person name="Detter C."/>
            <person name="Tapia R."/>
            <person name="Han C."/>
            <person name="Sutton G."/>
            <person name="Sims D."/>
        </authorList>
    </citation>
    <scope>NUCLEOTIDE SEQUENCE [LARGE SCALE GENOMIC DNA]</scope>
    <source>
        <strain>03BB102</strain>
    </source>
</reference>
<sequence>MTKITVVGAGSWGTALAMVLADNGHDVRIWGNRSELMDEINTKHENSRYLPGITLPSTIVAYSSLEEALVDVNVVLLVVPTKAYREVLQDMKKYVAGPTTWIHASKGIEPGTSKRISEVIEEEIPEDLIKDVVVLSGPSHAEEVGLRQATTVTSAAKRMEAAEEVQDLFMNSYFRVYTNPDIVGVELGGALKNIIALAAGITDGLGLGDNAKAALMTRGLTEIARLGRKMGGNPLTFAGLTGMGDLIVTCTSVHSRNWRAGNMLGKGHSLEEVLESMGMVVEGVRTTKAAHELAEKMEVEMPITAALYDVLFNGNNVKDAVGSLMGRVRKHEVEAIPDLL</sequence>